<keyword id="KW-0997">Cell inner membrane</keyword>
<keyword id="KW-1003">Cell membrane</keyword>
<keyword id="KW-0472">Membrane</keyword>
<keyword id="KW-1185">Reference proteome</keyword>
<organism>
    <name type="scientific">Shewanella loihica (strain ATCC BAA-1088 / PV-4)</name>
    <dbReference type="NCBI Taxonomy" id="323850"/>
    <lineage>
        <taxon>Bacteria</taxon>
        <taxon>Pseudomonadati</taxon>
        <taxon>Pseudomonadota</taxon>
        <taxon>Gammaproteobacteria</taxon>
        <taxon>Alteromonadales</taxon>
        <taxon>Shewanellaceae</taxon>
        <taxon>Shewanella</taxon>
    </lineage>
</organism>
<gene>
    <name evidence="1" type="primary">syd</name>
    <name type="ordered locus">Shew_2653</name>
</gene>
<evidence type="ECO:0000255" key="1">
    <source>
        <dbReference type="HAMAP-Rule" id="MF_01104"/>
    </source>
</evidence>
<name>SYDP_SHELP</name>
<feature type="chain" id="PRO_0000298260" description="Protein Syd">
    <location>
        <begin position="1"/>
        <end position="220"/>
    </location>
</feature>
<comment type="function">
    <text evidence="1">Interacts with the SecY protein in vivo. May bind preferentially to an uncomplexed state of SecY, thus functioning either as a chelating agent for excess SecY in the cell or as a regulatory factor that negatively controls the translocase function.</text>
</comment>
<comment type="subcellular location">
    <subcellularLocation>
        <location evidence="1">Cell inner membrane</location>
        <topology evidence="1">Peripheral membrane protein</topology>
        <orientation evidence="1">Cytoplasmic side</orientation>
    </subcellularLocation>
    <text evidence="1">Loosely associated with the cytoplasmic side of the inner membrane, probably via SecY.</text>
</comment>
<comment type="similarity">
    <text evidence="1">Belongs to the Syd family.</text>
</comment>
<dbReference type="EMBL" id="CP000606">
    <property type="protein sequence ID" value="ABO24519.1"/>
    <property type="molecule type" value="Genomic_DNA"/>
</dbReference>
<dbReference type="RefSeq" id="WP_011866450.1">
    <property type="nucleotide sequence ID" value="NC_009092.1"/>
</dbReference>
<dbReference type="SMR" id="A3QGC1"/>
<dbReference type="STRING" id="323850.Shew_2653"/>
<dbReference type="KEGG" id="slo:Shew_2653"/>
<dbReference type="eggNOG" id="ENOG502ZCMR">
    <property type="taxonomic scope" value="Bacteria"/>
</dbReference>
<dbReference type="HOGENOM" id="CLU_121866_0_0_6"/>
<dbReference type="OrthoDB" id="5599437at2"/>
<dbReference type="Proteomes" id="UP000001558">
    <property type="component" value="Chromosome"/>
</dbReference>
<dbReference type="GO" id="GO:0009898">
    <property type="term" value="C:cytoplasmic side of plasma membrane"/>
    <property type="evidence" value="ECO:0007669"/>
    <property type="project" value="InterPro"/>
</dbReference>
<dbReference type="CDD" id="cd16323">
    <property type="entry name" value="Syd"/>
    <property type="match status" value="1"/>
</dbReference>
<dbReference type="Gene3D" id="3.40.1580.20">
    <property type="entry name" value="Syd protein"/>
    <property type="match status" value="1"/>
</dbReference>
<dbReference type="HAMAP" id="MF_01104">
    <property type="entry name" value="Syd"/>
    <property type="match status" value="1"/>
</dbReference>
<dbReference type="InterPro" id="IPR009948">
    <property type="entry name" value="Syd"/>
</dbReference>
<dbReference type="InterPro" id="IPR038228">
    <property type="entry name" value="Syd_sf"/>
</dbReference>
<dbReference type="NCBIfam" id="NF003439">
    <property type="entry name" value="PRK04968.1"/>
    <property type="match status" value="1"/>
</dbReference>
<dbReference type="Pfam" id="PF07348">
    <property type="entry name" value="Syd"/>
    <property type="match status" value="1"/>
</dbReference>
<protein>
    <recommendedName>
        <fullName evidence="1">Protein Syd</fullName>
    </recommendedName>
</protein>
<reference key="1">
    <citation type="submission" date="2007-03" db="EMBL/GenBank/DDBJ databases">
        <title>Complete sequence of Shewanella loihica PV-4.</title>
        <authorList>
            <consortium name="US DOE Joint Genome Institute"/>
            <person name="Copeland A."/>
            <person name="Lucas S."/>
            <person name="Lapidus A."/>
            <person name="Barry K."/>
            <person name="Detter J.C."/>
            <person name="Glavina del Rio T."/>
            <person name="Hammon N."/>
            <person name="Israni S."/>
            <person name="Dalin E."/>
            <person name="Tice H."/>
            <person name="Pitluck S."/>
            <person name="Chain P."/>
            <person name="Malfatti S."/>
            <person name="Shin M."/>
            <person name="Vergez L."/>
            <person name="Schmutz J."/>
            <person name="Larimer F."/>
            <person name="Land M."/>
            <person name="Hauser L."/>
            <person name="Kyrpides N."/>
            <person name="Mikhailova N."/>
            <person name="Romine M.F."/>
            <person name="Serres G."/>
            <person name="Fredrickson J."/>
            <person name="Tiedje J."/>
            <person name="Richardson P."/>
        </authorList>
    </citation>
    <scope>NUCLEOTIDE SEQUENCE [LARGE SCALE GENOMIC DNA]</scope>
    <source>
        <strain>ATCC BAA-1088 / PV-4</strain>
    </source>
</reference>
<accession>A3QGC1</accession>
<proteinExistence type="inferred from homology"/>
<sequence length="220" mass="25224">MSSLPALDQFFTLYHQAYSDKLGESPRYFPLGEASPCVLECDQEKVDASPERSVQWQAVKRDSQGPFDNIEHALSITLHPSIQAFYGRYFAAPLMFESEFGEGELLQPWNQQDFEYLQQNLIGHLMMKQKLKQPATWFIGVLGEGDEMLVVENETGSVWIEIPGEQPHRQLAASLEDFIASLRPRVCPPQKPVEAPMPETDHPGIWQRLKTMWRHLIAKR</sequence>